<organism>
    <name type="scientific">Nematostella vectensis</name>
    <name type="common">Starlet sea anemone</name>
    <dbReference type="NCBI Taxonomy" id="45351"/>
    <lineage>
        <taxon>Eukaryota</taxon>
        <taxon>Metazoa</taxon>
        <taxon>Cnidaria</taxon>
        <taxon>Anthozoa</taxon>
        <taxon>Hexacorallia</taxon>
        <taxon>Actiniaria</taxon>
        <taxon>Edwardsiidae</taxon>
        <taxon>Nematostella</taxon>
    </lineage>
</organism>
<evidence type="ECO:0000250" key="1"/>
<evidence type="ECO:0000305" key="2"/>
<name>PSMG3_NEMVE</name>
<feature type="chain" id="PRO_0000341399" description="Proteasome assembly chaperone 3">
    <location>
        <begin position="1"/>
        <end position="135"/>
    </location>
</feature>
<dbReference type="EMBL" id="DS469729">
    <property type="protein sequence ID" value="EDO34478.1"/>
    <property type="molecule type" value="Genomic_DNA"/>
</dbReference>
<dbReference type="RefSeq" id="XP_001626578.1">
    <property type="nucleotide sequence ID" value="XM_001626528.1"/>
</dbReference>
<dbReference type="SMR" id="A7SP74"/>
<dbReference type="STRING" id="45351.A7SP74"/>
<dbReference type="EnsemblMetazoa" id="EDO34478">
    <property type="protein sequence ID" value="EDO34478"/>
    <property type="gene ID" value="NEMVEDRAFT_v1g246523"/>
</dbReference>
<dbReference type="GeneID" id="5505825"/>
<dbReference type="KEGG" id="nve:5505825"/>
<dbReference type="eggNOG" id="KOG4828">
    <property type="taxonomic scope" value="Eukaryota"/>
</dbReference>
<dbReference type="HOGENOM" id="CLU_133503_1_0_1"/>
<dbReference type="InParanoid" id="A7SP74"/>
<dbReference type="OMA" id="ANCDDPQ"/>
<dbReference type="OrthoDB" id="5839at2759"/>
<dbReference type="PhylomeDB" id="A7SP74"/>
<dbReference type="Proteomes" id="UP000001593">
    <property type="component" value="Unassembled WGS sequence"/>
</dbReference>
<dbReference type="GO" id="GO:0043248">
    <property type="term" value="P:proteasome assembly"/>
    <property type="evidence" value="ECO:0007669"/>
    <property type="project" value="InterPro"/>
</dbReference>
<dbReference type="Gene3D" id="3.30.230.90">
    <property type="match status" value="1"/>
</dbReference>
<dbReference type="InterPro" id="IPR018788">
    <property type="entry name" value="Proteasome_assmbl_chp_3"/>
</dbReference>
<dbReference type="InterPro" id="IPR053720">
    <property type="entry name" value="Psm_Assembly_Chaperone"/>
</dbReference>
<dbReference type="PANTHER" id="PTHR31051">
    <property type="entry name" value="PROTEASOME ASSEMBLY CHAPERONE 3"/>
    <property type="match status" value="1"/>
</dbReference>
<dbReference type="PANTHER" id="PTHR31051:SF1">
    <property type="entry name" value="PROTEASOME ASSEMBLY CHAPERONE 3"/>
    <property type="match status" value="1"/>
</dbReference>
<dbReference type="Pfam" id="PF10178">
    <property type="entry name" value="PAC3"/>
    <property type="match status" value="1"/>
</dbReference>
<sequence>MAAAIDGSLPVCRQSAALIDGVHTDFLASWYSDRILVLVTQFQKFGTLVSVTRDQPVARPDQAQGGTDSHTFTTKVLMGDDLPIWHVYGQQIFKAINGEDGCKPVLVAIALQNHSPEILKCILGQLESIRQVQTP</sequence>
<keyword id="KW-0143">Chaperone</keyword>
<keyword id="KW-1185">Reference proteome</keyword>
<gene>
    <name type="primary">psmg3</name>
    <name type="ORF">v1g246523</name>
</gene>
<accession>A7SP74</accession>
<protein>
    <recommendedName>
        <fullName>Proteasome assembly chaperone 3</fullName>
    </recommendedName>
</protein>
<reference key="1">
    <citation type="journal article" date="2007" name="Science">
        <title>Sea anemone genome reveals ancestral eumetazoan gene repertoire and genomic organization.</title>
        <authorList>
            <person name="Putnam N.H."/>
            <person name="Srivastava M."/>
            <person name="Hellsten U."/>
            <person name="Dirks B."/>
            <person name="Chapman J."/>
            <person name="Salamov A."/>
            <person name="Terry A."/>
            <person name="Shapiro H."/>
            <person name="Lindquist E."/>
            <person name="Kapitonov V.V."/>
            <person name="Jurka J."/>
            <person name="Genikhovich G."/>
            <person name="Grigoriev I.V."/>
            <person name="Lucas S.M."/>
            <person name="Steele R.E."/>
            <person name="Finnerty J.R."/>
            <person name="Technau U."/>
            <person name="Martindale M.Q."/>
            <person name="Rokhsar D.S."/>
        </authorList>
    </citation>
    <scope>NUCLEOTIDE SEQUENCE [LARGE SCALE GENOMIC DNA]</scope>
    <source>
        <strain>CH2 X CH6</strain>
    </source>
</reference>
<comment type="function">
    <text evidence="1">Chaperone protein which promotes assembly of the 20S proteasome. May cooperate with psmg1-psmg2 heterodimers to orchestrate the correct assembly of proteasomes (By similarity).</text>
</comment>
<comment type="similarity">
    <text evidence="2">Belongs to the PSMG3 family.</text>
</comment>
<proteinExistence type="inferred from homology"/>